<protein>
    <recommendedName>
        <fullName evidence="1">Serine hydroxymethyltransferase</fullName>
        <shortName evidence="1">SHMT</shortName>
        <shortName evidence="1">Serine methylase</shortName>
        <ecNumber evidence="1">2.1.2.1</ecNumber>
    </recommendedName>
</protein>
<dbReference type="EC" id="2.1.2.1" evidence="1"/>
<dbReference type="EMBL" id="AP009552">
    <property type="protein sequence ID" value="BAG03702.1"/>
    <property type="molecule type" value="Genomic_DNA"/>
</dbReference>
<dbReference type="RefSeq" id="WP_002797075.1">
    <property type="nucleotide sequence ID" value="NC_010296.1"/>
</dbReference>
<dbReference type="SMR" id="B0JPX8"/>
<dbReference type="STRING" id="449447.MAE_38800"/>
<dbReference type="PaxDb" id="449447-MAE_38800"/>
<dbReference type="EnsemblBacteria" id="BAG03702">
    <property type="protein sequence ID" value="BAG03702"/>
    <property type="gene ID" value="MAE_38800"/>
</dbReference>
<dbReference type="KEGG" id="mar:MAE_38800"/>
<dbReference type="eggNOG" id="COG0112">
    <property type="taxonomic scope" value="Bacteria"/>
</dbReference>
<dbReference type="HOGENOM" id="CLU_022477_2_1_3"/>
<dbReference type="BioCyc" id="MAER449447:MAE_RS16770-MONOMER"/>
<dbReference type="UniPathway" id="UPA00193"/>
<dbReference type="UniPathway" id="UPA00288">
    <property type="reaction ID" value="UER01023"/>
</dbReference>
<dbReference type="Proteomes" id="UP000001510">
    <property type="component" value="Chromosome"/>
</dbReference>
<dbReference type="GO" id="GO:0005829">
    <property type="term" value="C:cytosol"/>
    <property type="evidence" value="ECO:0007669"/>
    <property type="project" value="TreeGrafter"/>
</dbReference>
<dbReference type="GO" id="GO:0004372">
    <property type="term" value="F:glycine hydroxymethyltransferase activity"/>
    <property type="evidence" value="ECO:0007669"/>
    <property type="project" value="UniProtKB-UniRule"/>
</dbReference>
<dbReference type="GO" id="GO:0030170">
    <property type="term" value="F:pyridoxal phosphate binding"/>
    <property type="evidence" value="ECO:0007669"/>
    <property type="project" value="UniProtKB-UniRule"/>
</dbReference>
<dbReference type="GO" id="GO:0019264">
    <property type="term" value="P:glycine biosynthetic process from serine"/>
    <property type="evidence" value="ECO:0007669"/>
    <property type="project" value="UniProtKB-UniRule"/>
</dbReference>
<dbReference type="GO" id="GO:0035999">
    <property type="term" value="P:tetrahydrofolate interconversion"/>
    <property type="evidence" value="ECO:0007669"/>
    <property type="project" value="UniProtKB-UniRule"/>
</dbReference>
<dbReference type="CDD" id="cd00378">
    <property type="entry name" value="SHMT"/>
    <property type="match status" value="1"/>
</dbReference>
<dbReference type="FunFam" id="3.40.640.10:FF:000001">
    <property type="entry name" value="Serine hydroxymethyltransferase"/>
    <property type="match status" value="1"/>
</dbReference>
<dbReference type="Gene3D" id="3.90.1150.10">
    <property type="entry name" value="Aspartate Aminotransferase, domain 1"/>
    <property type="match status" value="1"/>
</dbReference>
<dbReference type="Gene3D" id="3.40.640.10">
    <property type="entry name" value="Type I PLP-dependent aspartate aminotransferase-like (Major domain)"/>
    <property type="match status" value="1"/>
</dbReference>
<dbReference type="HAMAP" id="MF_00051">
    <property type="entry name" value="SHMT"/>
    <property type="match status" value="1"/>
</dbReference>
<dbReference type="InterPro" id="IPR015424">
    <property type="entry name" value="PyrdxlP-dep_Trfase"/>
</dbReference>
<dbReference type="InterPro" id="IPR015421">
    <property type="entry name" value="PyrdxlP-dep_Trfase_major"/>
</dbReference>
<dbReference type="InterPro" id="IPR015422">
    <property type="entry name" value="PyrdxlP-dep_Trfase_small"/>
</dbReference>
<dbReference type="InterPro" id="IPR001085">
    <property type="entry name" value="Ser_HO-MeTrfase"/>
</dbReference>
<dbReference type="InterPro" id="IPR049943">
    <property type="entry name" value="Ser_HO-MeTrfase-like"/>
</dbReference>
<dbReference type="InterPro" id="IPR019798">
    <property type="entry name" value="Ser_HO-MeTrfase_PLP_BS"/>
</dbReference>
<dbReference type="InterPro" id="IPR039429">
    <property type="entry name" value="SHMT-like_dom"/>
</dbReference>
<dbReference type="NCBIfam" id="NF000586">
    <property type="entry name" value="PRK00011.1"/>
    <property type="match status" value="1"/>
</dbReference>
<dbReference type="PANTHER" id="PTHR11680">
    <property type="entry name" value="SERINE HYDROXYMETHYLTRANSFERASE"/>
    <property type="match status" value="1"/>
</dbReference>
<dbReference type="PANTHER" id="PTHR11680:SF35">
    <property type="entry name" value="SERINE HYDROXYMETHYLTRANSFERASE 1"/>
    <property type="match status" value="1"/>
</dbReference>
<dbReference type="Pfam" id="PF00464">
    <property type="entry name" value="SHMT"/>
    <property type="match status" value="1"/>
</dbReference>
<dbReference type="PIRSF" id="PIRSF000412">
    <property type="entry name" value="SHMT"/>
    <property type="match status" value="1"/>
</dbReference>
<dbReference type="SUPFAM" id="SSF53383">
    <property type="entry name" value="PLP-dependent transferases"/>
    <property type="match status" value="1"/>
</dbReference>
<dbReference type="PROSITE" id="PS00096">
    <property type="entry name" value="SHMT"/>
    <property type="match status" value="1"/>
</dbReference>
<proteinExistence type="inferred from homology"/>
<accession>B0JPX8</accession>
<comment type="function">
    <text evidence="1">Catalyzes the reversible interconversion of serine and glycine with tetrahydrofolate (THF) serving as the one-carbon carrier. This reaction serves as the major source of one-carbon groups required for the biosynthesis of purines, thymidylate, methionine, and other important biomolecules. Also exhibits THF-independent aldolase activity toward beta-hydroxyamino acids, producing glycine and aldehydes, via a retro-aldol mechanism.</text>
</comment>
<comment type="catalytic activity">
    <reaction evidence="1">
        <text>(6R)-5,10-methylene-5,6,7,8-tetrahydrofolate + glycine + H2O = (6S)-5,6,7,8-tetrahydrofolate + L-serine</text>
        <dbReference type="Rhea" id="RHEA:15481"/>
        <dbReference type="ChEBI" id="CHEBI:15377"/>
        <dbReference type="ChEBI" id="CHEBI:15636"/>
        <dbReference type="ChEBI" id="CHEBI:33384"/>
        <dbReference type="ChEBI" id="CHEBI:57305"/>
        <dbReference type="ChEBI" id="CHEBI:57453"/>
        <dbReference type="EC" id="2.1.2.1"/>
    </reaction>
</comment>
<comment type="cofactor">
    <cofactor evidence="1">
        <name>pyridoxal 5'-phosphate</name>
        <dbReference type="ChEBI" id="CHEBI:597326"/>
    </cofactor>
</comment>
<comment type="pathway">
    <text evidence="1">One-carbon metabolism; tetrahydrofolate interconversion.</text>
</comment>
<comment type="pathway">
    <text evidence="1">Amino-acid biosynthesis; glycine biosynthesis; glycine from L-serine: step 1/1.</text>
</comment>
<comment type="subunit">
    <text evidence="1">Homodimer.</text>
</comment>
<comment type="subcellular location">
    <subcellularLocation>
        <location evidence="1">Cytoplasm</location>
    </subcellularLocation>
</comment>
<comment type="similarity">
    <text evidence="1">Belongs to the SHMT family.</text>
</comment>
<keyword id="KW-0028">Amino-acid biosynthesis</keyword>
<keyword id="KW-0963">Cytoplasm</keyword>
<keyword id="KW-0554">One-carbon metabolism</keyword>
<keyword id="KW-0663">Pyridoxal phosphate</keyword>
<keyword id="KW-0808">Transferase</keyword>
<sequence>MTDTNLDILSLTDPAIAGILQKELQRQRDHLELIASENFTSAAVMAAQGSVLTNKYAEGLPKKRYYGGCEYIDEAEQLAIDRVKRLFGANHANVQPHSGAQANFAVFLTLLQPGDTIMGMDLSHGGHLTHGSPVNVSGKWFRVVQYGVSPESERLDYDLILDIARKEKPKLIICGYSAYSRQIDFEKFRAIADEVGAYLMADIAHIAGLVATGHHPNPLPHCDVVTTTTHKTLRGPRGGLIMTKDEELGKKFDKSVFPGTQGGPLEHVVAAKAVAFGEALKPEFKIYSGQVIANAQALAGQLKARGIKIVTDGTDNHLMLLDLRSVGMTGKEADRLVSTINITANKNTVPFDPESPFVTSGLRLGSPAMTTRGLGETEFIEIGNIIADILLNPGDEALRTACRQRVAKLCESFPLYPHLHISVPALA</sequence>
<organism>
    <name type="scientific">Microcystis aeruginosa (strain NIES-843 / IAM M-2473)</name>
    <dbReference type="NCBI Taxonomy" id="449447"/>
    <lineage>
        <taxon>Bacteria</taxon>
        <taxon>Bacillati</taxon>
        <taxon>Cyanobacteriota</taxon>
        <taxon>Cyanophyceae</taxon>
        <taxon>Oscillatoriophycideae</taxon>
        <taxon>Chroococcales</taxon>
        <taxon>Microcystaceae</taxon>
        <taxon>Microcystis</taxon>
    </lineage>
</organism>
<gene>
    <name evidence="1" type="primary">glyA</name>
    <name type="ordered locus">MAE_38800</name>
</gene>
<reference key="1">
    <citation type="journal article" date="2007" name="DNA Res.">
        <title>Complete genomic structure of the bloom-forming toxic cyanobacterium Microcystis aeruginosa NIES-843.</title>
        <authorList>
            <person name="Kaneko T."/>
            <person name="Nakajima N."/>
            <person name="Okamoto S."/>
            <person name="Suzuki I."/>
            <person name="Tanabe Y."/>
            <person name="Tamaoki M."/>
            <person name="Nakamura Y."/>
            <person name="Kasai F."/>
            <person name="Watanabe A."/>
            <person name="Kawashima K."/>
            <person name="Kishida Y."/>
            <person name="Ono A."/>
            <person name="Shimizu Y."/>
            <person name="Takahashi C."/>
            <person name="Minami C."/>
            <person name="Fujishiro T."/>
            <person name="Kohara M."/>
            <person name="Katoh M."/>
            <person name="Nakazaki N."/>
            <person name="Nakayama S."/>
            <person name="Yamada M."/>
            <person name="Tabata S."/>
            <person name="Watanabe M.M."/>
        </authorList>
    </citation>
    <scope>NUCLEOTIDE SEQUENCE [LARGE SCALE GENOMIC DNA]</scope>
    <source>
        <strain>NIES-843 / IAM M-247</strain>
    </source>
</reference>
<feature type="chain" id="PRO_1000074900" description="Serine hydroxymethyltransferase">
    <location>
        <begin position="1"/>
        <end position="427"/>
    </location>
</feature>
<feature type="binding site" evidence="1">
    <location>
        <position position="122"/>
    </location>
    <ligand>
        <name>(6S)-5,6,7,8-tetrahydrofolate</name>
        <dbReference type="ChEBI" id="CHEBI:57453"/>
    </ligand>
</feature>
<feature type="binding site" evidence="1">
    <location>
        <begin position="126"/>
        <end position="128"/>
    </location>
    <ligand>
        <name>(6S)-5,6,7,8-tetrahydrofolate</name>
        <dbReference type="ChEBI" id="CHEBI:57453"/>
    </ligand>
</feature>
<feature type="binding site" evidence="1">
    <location>
        <position position="247"/>
    </location>
    <ligand>
        <name>(6S)-5,6,7,8-tetrahydrofolate</name>
        <dbReference type="ChEBI" id="CHEBI:57453"/>
    </ligand>
</feature>
<feature type="binding site" evidence="1">
    <location>
        <begin position="355"/>
        <end position="357"/>
    </location>
    <ligand>
        <name>(6S)-5,6,7,8-tetrahydrofolate</name>
        <dbReference type="ChEBI" id="CHEBI:57453"/>
    </ligand>
</feature>
<feature type="site" description="Plays an important role in substrate specificity" evidence="1">
    <location>
        <position position="230"/>
    </location>
</feature>
<feature type="modified residue" description="N6-(pyridoxal phosphate)lysine" evidence="1">
    <location>
        <position position="231"/>
    </location>
</feature>
<name>GLYA_MICAN</name>
<evidence type="ECO:0000255" key="1">
    <source>
        <dbReference type="HAMAP-Rule" id="MF_00051"/>
    </source>
</evidence>